<accession>A5U313</accession>
<name>OTC_MYCTA</name>
<proteinExistence type="inferred from homology"/>
<organism>
    <name type="scientific">Mycobacterium tuberculosis (strain ATCC 25177 / H37Ra)</name>
    <dbReference type="NCBI Taxonomy" id="419947"/>
    <lineage>
        <taxon>Bacteria</taxon>
        <taxon>Bacillati</taxon>
        <taxon>Actinomycetota</taxon>
        <taxon>Actinomycetes</taxon>
        <taxon>Mycobacteriales</taxon>
        <taxon>Mycobacteriaceae</taxon>
        <taxon>Mycobacterium</taxon>
        <taxon>Mycobacterium tuberculosis complex</taxon>
    </lineage>
</organism>
<dbReference type="EC" id="2.1.3.3" evidence="2"/>
<dbReference type="EMBL" id="CP000611">
    <property type="protein sequence ID" value="ABQ73413.1"/>
    <property type="molecule type" value="Genomic_DNA"/>
</dbReference>
<dbReference type="RefSeq" id="WP_003408165.1">
    <property type="nucleotide sequence ID" value="NZ_CP016972.1"/>
</dbReference>
<dbReference type="SMR" id="A5U313"/>
<dbReference type="KEGG" id="mra:MRA_1667"/>
<dbReference type="eggNOG" id="COG0078">
    <property type="taxonomic scope" value="Bacteria"/>
</dbReference>
<dbReference type="HOGENOM" id="CLU_043846_3_2_11"/>
<dbReference type="UniPathway" id="UPA00068">
    <property type="reaction ID" value="UER00112"/>
</dbReference>
<dbReference type="Proteomes" id="UP000001988">
    <property type="component" value="Chromosome"/>
</dbReference>
<dbReference type="GO" id="GO:0005737">
    <property type="term" value="C:cytoplasm"/>
    <property type="evidence" value="ECO:0007669"/>
    <property type="project" value="UniProtKB-SubCell"/>
</dbReference>
<dbReference type="GO" id="GO:0016597">
    <property type="term" value="F:amino acid binding"/>
    <property type="evidence" value="ECO:0007669"/>
    <property type="project" value="InterPro"/>
</dbReference>
<dbReference type="GO" id="GO:0004585">
    <property type="term" value="F:ornithine carbamoyltransferase activity"/>
    <property type="evidence" value="ECO:0007669"/>
    <property type="project" value="UniProtKB-UniRule"/>
</dbReference>
<dbReference type="GO" id="GO:0042450">
    <property type="term" value="P:arginine biosynthetic process via ornithine"/>
    <property type="evidence" value="ECO:0007669"/>
    <property type="project" value="TreeGrafter"/>
</dbReference>
<dbReference type="GO" id="GO:0019240">
    <property type="term" value="P:citrulline biosynthetic process"/>
    <property type="evidence" value="ECO:0007669"/>
    <property type="project" value="TreeGrafter"/>
</dbReference>
<dbReference type="GO" id="GO:0006526">
    <property type="term" value="P:L-arginine biosynthetic process"/>
    <property type="evidence" value="ECO:0007669"/>
    <property type="project" value="UniProtKB-UniRule"/>
</dbReference>
<dbReference type="FunFam" id="3.40.50.1370:FF:000008">
    <property type="entry name" value="Ornithine carbamoyltransferase"/>
    <property type="match status" value="1"/>
</dbReference>
<dbReference type="Gene3D" id="3.40.50.1370">
    <property type="entry name" value="Aspartate/ornithine carbamoyltransferase"/>
    <property type="match status" value="2"/>
</dbReference>
<dbReference type="HAMAP" id="MF_01109">
    <property type="entry name" value="OTCase"/>
    <property type="match status" value="1"/>
</dbReference>
<dbReference type="InterPro" id="IPR006132">
    <property type="entry name" value="Asp/Orn_carbamoyltranf_P-bd"/>
</dbReference>
<dbReference type="InterPro" id="IPR006130">
    <property type="entry name" value="Asp/Orn_carbamoylTrfase"/>
</dbReference>
<dbReference type="InterPro" id="IPR036901">
    <property type="entry name" value="Asp/Orn_carbamoylTrfase_sf"/>
</dbReference>
<dbReference type="InterPro" id="IPR006131">
    <property type="entry name" value="Asp_carbamoyltransf_Asp/Orn-bd"/>
</dbReference>
<dbReference type="InterPro" id="IPR002292">
    <property type="entry name" value="Orn/put_carbamltrans"/>
</dbReference>
<dbReference type="InterPro" id="IPR024904">
    <property type="entry name" value="OTCase_ArgI"/>
</dbReference>
<dbReference type="NCBIfam" id="TIGR00658">
    <property type="entry name" value="orni_carb_tr"/>
    <property type="match status" value="1"/>
</dbReference>
<dbReference type="NCBIfam" id="NF001986">
    <property type="entry name" value="PRK00779.1"/>
    <property type="match status" value="1"/>
</dbReference>
<dbReference type="PANTHER" id="PTHR45753">
    <property type="entry name" value="ORNITHINE CARBAMOYLTRANSFERASE, MITOCHONDRIAL"/>
    <property type="match status" value="1"/>
</dbReference>
<dbReference type="PANTHER" id="PTHR45753:SF3">
    <property type="entry name" value="ORNITHINE TRANSCARBAMYLASE, MITOCHONDRIAL"/>
    <property type="match status" value="1"/>
</dbReference>
<dbReference type="Pfam" id="PF00185">
    <property type="entry name" value="OTCace"/>
    <property type="match status" value="1"/>
</dbReference>
<dbReference type="Pfam" id="PF02729">
    <property type="entry name" value="OTCace_N"/>
    <property type="match status" value="1"/>
</dbReference>
<dbReference type="PRINTS" id="PR00100">
    <property type="entry name" value="AOTCASE"/>
</dbReference>
<dbReference type="PRINTS" id="PR00102">
    <property type="entry name" value="OTCASE"/>
</dbReference>
<dbReference type="SUPFAM" id="SSF53671">
    <property type="entry name" value="Aspartate/ornithine carbamoyltransferase"/>
    <property type="match status" value="1"/>
</dbReference>
<dbReference type="PROSITE" id="PS00097">
    <property type="entry name" value="CARBAMOYLTRANSFERASE"/>
    <property type="match status" value="1"/>
</dbReference>
<gene>
    <name evidence="2" type="primary">argF</name>
    <name type="ordered locus">MRA_1667</name>
</gene>
<sequence length="307" mass="33057">MIRHFLRDDDLSPAEQAEVLELAAELKKDPVSRRPLQGPRGVAVIFDKNSTRTRFSFELGIAQLGGHAVVVDSGSTQLGRDETLQDTAKVLSRYVDAIVWRTFGQERLDAMASVATVPVINALSDEFHPCQVLADLQTIAERKGALRGLRLSYFGDGANNMAHSLLLGGVTAGIHVTVAAPEGFLPDPSVRAAAERRAQDTGASVTVTADAHAAAAGADVLVTDTWTSMGQENDGLDRVKPFRPFQLNSRLLALADSDAIVLHCLPAHRGDEITDAVMDGPASAVWDEAENRLHAQKALLVWLLERS</sequence>
<evidence type="ECO:0000250" key="1"/>
<evidence type="ECO:0000255" key="2">
    <source>
        <dbReference type="HAMAP-Rule" id="MF_01109"/>
    </source>
</evidence>
<comment type="function">
    <text evidence="1">Reversibly catalyzes the transfer of the carbamoyl group from carbamoyl phosphate (CP) to the N(epsilon) atom of ornithine (ORN) to produce L-citrulline.</text>
</comment>
<comment type="catalytic activity">
    <reaction evidence="2">
        <text>carbamoyl phosphate + L-ornithine = L-citrulline + phosphate + H(+)</text>
        <dbReference type="Rhea" id="RHEA:19513"/>
        <dbReference type="ChEBI" id="CHEBI:15378"/>
        <dbReference type="ChEBI" id="CHEBI:43474"/>
        <dbReference type="ChEBI" id="CHEBI:46911"/>
        <dbReference type="ChEBI" id="CHEBI:57743"/>
        <dbReference type="ChEBI" id="CHEBI:58228"/>
        <dbReference type="EC" id="2.1.3.3"/>
    </reaction>
</comment>
<comment type="pathway">
    <text evidence="2">Amino-acid biosynthesis; L-arginine biosynthesis; L-arginine from L-ornithine and carbamoyl phosphate: step 1/3.</text>
</comment>
<comment type="subcellular location">
    <subcellularLocation>
        <location evidence="2">Cytoplasm</location>
    </subcellularLocation>
</comment>
<comment type="similarity">
    <text evidence="2">Belongs to the aspartate/ornithine carbamoyltransferase superfamily. OTCase family.</text>
</comment>
<protein>
    <recommendedName>
        <fullName evidence="2">Ornithine carbamoyltransferase</fullName>
        <shortName evidence="2">OTCase</shortName>
        <ecNumber evidence="2">2.1.3.3</ecNumber>
    </recommendedName>
</protein>
<feature type="chain" id="PRO_1000065104" description="Ornithine carbamoyltransferase">
    <location>
        <begin position="1"/>
        <end position="307"/>
    </location>
</feature>
<feature type="binding site" evidence="2">
    <location>
        <begin position="50"/>
        <end position="53"/>
    </location>
    <ligand>
        <name>carbamoyl phosphate</name>
        <dbReference type="ChEBI" id="CHEBI:58228"/>
    </ligand>
</feature>
<feature type="binding site" evidence="2">
    <location>
        <position position="77"/>
    </location>
    <ligand>
        <name>carbamoyl phosphate</name>
        <dbReference type="ChEBI" id="CHEBI:58228"/>
    </ligand>
</feature>
<feature type="binding site" evidence="2">
    <location>
        <position position="101"/>
    </location>
    <ligand>
        <name>carbamoyl phosphate</name>
        <dbReference type="ChEBI" id="CHEBI:58228"/>
    </ligand>
</feature>
<feature type="binding site" evidence="2">
    <location>
        <begin position="128"/>
        <end position="131"/>
    </location>
    <ligand>
        <name>carbamoyl phosphate</name>
        <dbReference type="ChEBI" id="CHEBI:58228"/>
    </ligand>
</feature>
<feature type="binding site" evidence="2">
    <location>
        <position position="160"/>
    </location>
    <ligand>
        <name>L-ornithine</name>
        <dbReference type="ChEBI" id="CHEBI:46911"/>
    </ligand>
</feature>
<feature type="binding site" evidence="2">
    <location>
        <position position="224"/>
    </location>
    <ligand>
        <name>L-ornithine</name>
        <dbReference type="ChEBI" id="CHEBI:46911"/>
    </ligand>
</feature>
<feature type="binding site" evidence="2">
    <location>
        <begin position="228"/>
        <end position="229"/>
    </location>
    <ligand>
        <name>L-ornithine</name>
        <dbReference type="ChEBI" id="CHEBI:46911"/>
    </ligand>
</feature>
<feature type="binding site" evidence="2">
    <location>
        <begin position="264"/>
        <end position="265"/>
    </location>
    <ligand>
        <name>carbamoyl phosphate</name>
        <dbReference type="ChEBI" id="CHEBI:58228"/>
    </ligand>
</feature>
<feature type="binding site" evidence="2">
    <location>
        <position position="292"/>
    </location>
    <ligand>
        <name>carbamoyl phosphate</name>
        <dbReference type="ChEBI" id="CHEBI:58228"/>
    </ligand>
</feature>
<reference key="1">
    <citation type="journal article" date="2008" name="PLoS ONE">
        <title>Genetic basis of virulence attenuation revealed by comparative genomic analysis of Mycobacterium tuberculosis strain H37Ra versus H37Rv.</title>
        <authorList>
            <person name="Zheng H."/>
            <person name="Lu L."/>
            <person name="Wang B."/>
            <person name="Pu S."/>
            <person name="Zhang X."/>
            <person name="Zhu G."/>
            <person name="Shi W."/>
            <person name="Zhang L."/>
            <person name="Wang H."/>
            <person name="Wang S."/>
            <person name="Zhao G."/>
            <person name="Zhang Y."/>
        </authorList>
    </citation>
    <scope>NUCLEOTIDE SEQUENCE [LARGE SCALE GENOMIC DNA]</scope>
    <source>
        <strain>ATCC 25177 / H37Ra</strain>
    </source>
</reference>
<keyword id="KW-0028">Amino-acid biosynthesis</keyword>
<keyword id="KW-0055">Arginine biosynthesis</keyword>
<keyword id="KW-0963">Cytoplasm</keyword>
<keyword id="KW-1185">Reference proteome</keyword>
<keyword id="KW-0808">Transferase</keyword>